<evidence type="ECO:0000250" key="1">
    <source>
        <dbReference type="UniProtKB" id="P04040"/>
    </source>
</evidence>
<evidence type="ECO:0000255" key="2"/>
<evidence type="ECO:0000255" key="3">
    <source>
        <dbReference type="PROSITE-ProRule" id="PRU10013"/>
    </source>
</evidence>
<evidence type="ECO:0000269" key="4">
    <source>
    </source>
</evidence>
<evidence type="ECO:0000269" key="5">
    <source>
    </source>
</evidence>
<evidence type="ECO:0000269" key="6">
    <source>
    </source>
</evidence>
<evidence type="ECO:0000305" key="7"/>
<evidence type="ECO:0007744" key="8">
    <source>
    </source>
</evidence>
<evidence type="ECO:0007829" key="9">
    <source>
        <dbReference type="PDB" id="1A4E"/>
    </source>
</evidence>
<proteinExistence type="evidence at protein level"/>
<dbReference type="EC" id="1.11.1.6" evidence="3"/>
<dbReference type="EMBL" id="X13028">
    <property type="protein sequence ID" value="CAA31443.1"/>
    <property type="molecule type" value="Genomic_DNA"/>
</dbReference>
<dbReference type="EMBL" id="Z68329">
    <property type="protein sequence ID" value="CAA92713.1"/>
    <property type="molecule type" value="Genomic_DNA"/>
</dbReference>
<dbReference type="EMBL" id="Z70202">
    <property type="protein sequence ID" value="CAA94095.1"/>
    <property type="molecule type" value="Genomic_DNA"/>
</dbReference>
<dbReference type="EMBL" id="AY723786">
    <property type="protein sequence ID" value="AAU09703.1"/>
    <property type="molecule type" value="Genomic_DNA"/>
</dbReference>
<dbReference type="EMBL" id="BK006938">
    <property type="protein sequence ID" value="DAA12096.1"/>
    <property type="molecule type" value="Genomic_DNA"/>
</dbReference>
<dbReference type="PIR" id="S07868">
    <property type="entry name" value="CSBYP"/>
</dbReference>
<dbReference type="RefSeq" id="NP_010542.1">
    <property type="nucleotide sequence ID" value="NM_001180564.1"/>
</dbReference>
<dbReference type="PDB" id="1A4E">
    <property type="method" value="X-ray"/>
    <property type="resolution" value="2.40 A"/>
    <property type="chains" value="A/B/C/D=15-502"/>
</dbReference>
<dbReference type="PDBsum" id="1A4E"/>
<dbReference type="SMR" id="P15202"/>
<dbReference type="BioGRID" id="32306">
    <property type="interactions" value="62"/>
</dbReference>
<dbReference type="DIP" id="DIP-4320N"/>
<dbReference type="FunCoup" id="P15202">
    <property type="interactions" value="1265"/>
</dbReference>
<dbReference type="IntAct" id="P15202">
    <property type="interactions" value="8"/>
</dbReference>
<dbReference type="MINT" id="P15202"/>
<dbReference type="STRING" id="4932.YDR256C"/>
<dbReference type="PeroxiBase" id="5175">
    <property type="entry name" value="SceKat01"/>
</dbReference>
<dbReference type="iPTMnet" id="P15202"/>
<dbReference type="PaxDb" id="4932-YDR256C"/>
<dbReference type="PeptideAtlas" id="P15202"/>
<dbReference type="EnsemblFungi" id="YDR256C_mRNA">
    <property type="protein sequence ID" value="YDR256C"/>
    <property type="gene ID" value="YDR256C"/>
</dbReference>
<dbReference type="GeneID" id="851843"/>
<dbReference type="KEGG" id="sce:YDR256C"/>
<dbReference type="AGR" id="SGD:S000002664"/>
<dbReference type="SGD" id="S000002664">
    <property type="gene designation" value="CTA1"/>
</dbReference>
<dbReference type="VEuPathDB" id="FungiDB:YDR256C"/>
<dbReference type="eggNOG" id="KOG0047">
    <property type="taxonomic scope" value="Eukaryota"/>
</dbReference>
<dbReference type="GeneTree" id="ENSGT00390000018100"/>
<dbReference type="HOGENOM" id="CLU_010645_2_0_1"/>
<dbReference type="InParanoid" id="P15202"/>
<dbReference type="OMA" id="KFRWNVF"/>
<dbReference type="OrthoDB" id="6880011at2759"/>
<dbReference type="BioCyc" id="YEAST:YDR256C-MONOMER"/>
<dbReference type="Reactome" id="R-SCE-3299685">
    <property type="pathway name" value="Detoxification of Reactive Oxygen Species"/>
</dbReference>
<dbReference type="Reactome" id="R-SCE-6798695">
    <property type="pathway name" value="Neutrophil degranulation"/>
</dbReference>
<dbReference type="Reactome" id="R-SCE-9033241">
    <property type="pathway name" value="Peroxisomal protein import"/>
</dbReference>
<dbReference type="BioGRID-ORCS" id="851843">
    <property type="hits" value="0 hits in 10 CRISPR screens"/>
</dbReference>
<dbReference type="EvolutionaryTrace" id="P15202"/>
<dbReference type="PRO" id="PR:P15202"/>
<dbReference type="Proteomes" id="UP000002311">
    <property type="component" value="Chromosome IV"/>
</dbReference>
<dbReference type="RNAct" id="P15202">
    <property type="molecule type" value="protein"/>
</dbReference>
<dbReference type="GO" id="GO:0005737">
    <property type="term" value="C:cytoplasm"/>
    <property type="evidence" value="ECO:0000318"/>
    <property type="project" value="GO_Central"/>
</dbReference>
<dbReference type="GO" id="GO:0005759">
    <property type="term" value="C:mitochondrial matrix"/>
    <property type="evidence" value="ECO:0000314"/>
    <property type="project" value="SGD"/>
</dbReference>
<dbReference type="GO" id="GO:0005739">
    <property type="term" value="C:mitochondrion"/>
    <property type="evidence" value="ECO:0000318"/>
    <property type="project" value="GO_Central"/>
</dbReference>
<dbReference type="GO" id="GO:0005782">
    <property type="term" value="C:peroxisomal matrix"/>
    <property type="evidence" value="ECO:0000314"/>
    <property type="project" value="SGD"/>
</dbReference>
<dbReference type="GO" id="GO:0005777">
    <property type="term" value="C:peroxisome"/>
    <property type="evidence" value="ECO:0000318"/>
    <property type="project" value="GO_Central"/>
</dbReference>
<dbReference type="GO" id="GO:0004096">
    <property type="term" value="F:catalase activity"/>
    <property type="evidence" value="ECO:0000314"/>
    <property type="project" value="SGD"/>
</dbReference>
<dbReference type="GO" id="GO:0020037">
    <property type="term" value="F:heme binding"/>
    <property type="evidence" value="ECO:0000318"/>
    <property type="project" value="GO_Central"/>
</dbReference>
<dbReference type="GO" id="GO:0046872">
    <property type="term" value="F:metal ion binding"/>
    <property type="evidence" value="ECO:0007669"/>
    <property type="project" value="UniProtKB-KW"/>
</dbReference>
<dbReference type="GO" id="GO:0042744">
    <property type="term" value="P:hydrogen peroxide catabolic process"/>
    <property type="evidence" value="ECO:0000314"/>
    <property type="project" value="SGD"/>
</dbReference>
<dbReference type="GO" id="GO:0042542">
    <property type="term" value="P:response to hydrogen peroxide"/>
    <property type="evidence" value="ECO:0000318"/>
    <property type="project" value="GO_Central"/>
</dbReference>
<dbReference type="GO" id="GO:0000302">
    <property type="term" value="P:response to reactive oxygen species"/>
    <property type="evidence" value="ECO:0000315"/>
    <property type="project" value="SGD"/>
</dbReference>
<dbReference type="CDD" id="cd08157">
    <property type="entry name" value="catalase_fungal"/>
    <property type="match status" value="1"/>
</dbReference>
<dbReference type="FunFam" id="2.40.180.10:FF:000001">
    <property type="entry name" value="Catalase"/>
    <property type="match status" value="1"/>
</dbReference>
<dbReference type="Gene3D" id="2.40.180.10">
    <property type="entry name" value="Catalase core domain"/>
    <property type="match status" value="1"/>
</dbReference>
<dbReference type="InterPro" id="IPR018028">
    <property type="entry name" value="Catalase"/>
</dbReference>
<dbReference type="InterPro" id="IPR024708">
    <property type="entry name" value="Catalase_AS"/>
</dbReference>
<dbReference type="InterPro" id="IPR024711">
    <property type="entry name" value="Catalase_clade1/3"/>
</dbReference>
<dbReference type="InterPro" id="IPR011614">
    <property type="entry name" value="Catalase_core"/>
</dbReference>
<dbReference type="InterPro" id="IPR002226">
    <property type="entry name" value="Catalase_haem_BS"/>
</dbReference>
<dbReference type="InterPro" id="IPR010582">
    <property type="entry name" value="Catalase_immune_responsive"/>
</dbReference>
<dbReference type="InterPro" id="IPR020835">
    <property type="entry name" value="Catalase_sf"/>
</dbReference>
<dbReference type="PANTHER" id="PTHR11465">
    <property type="entry name" value="CATALASE"/>
    <property type="match status" value="1"/>
</dbReference>
<dbReference type="PANTHER" id="PTHR11465:SF9">
    <property type="entry name" value="CATALASE"/>
    <property type="match status" value="1"/>
</dbReference>
<dbReference type="Pfam" id="PF00199">
    <property type="entry name" value="Catalase"/>
    <property type="match status" value="1"/>
</dbReference>
<dbReference type="Pfam" id="PF06628">
    <property type="entry name" value="Catalase-rel"/>
    <property type="match status" value="1"/>
</dbReference>
<dbReference type="PIRSF" id="PIRSF038928">
    <property type="entry name" value="Catalase_clade1-3"/>
    <property type="match status" value="1"/>
</dbReference>
<dbReference type="PRINTS" id="PR00067">
    <property type="entry name" value="CATALASE"/>
</dbReference>
<dbReference type="SMART" id="SM01060">
    <property type="entry name" value="Catalase"/>
    <property type="match status" value="1"/>
</dbReference>
<dbReference type="SUPFAM" id="SSF56634">
    <property type="entry name" value="Heme-dependent catalase-like"/>
    <property type="match status" value="1"/>
</dbReference>
<dbReference type="PROSITE" id="PS00437">
    <property type="entry name" value="CATALASE_1"/>
    <property type="match status" value="1"/>
</dbReference>
<dbReference type="PROSITE" id="PS00438">
    <property type="entry name" value="CATALASE_2"/>
    <property type="match status" value="1"/>
</dbReference>
<dbReference type="PROSITE" id="PS51402">
    <property type="entry name" value="CATALASE_3"/>
    <property type="match status" value="1"/>
</dbReference>
<comment type="function">
    <text evidence="1">Catalyzes the degradation of hydrogen peroxide (H(2)O(2)) generated by peroxisomal oxidases to water and oxygen, thereby protecting cells from the toxic effects of hydrogen peroxide.</text>
</comment>
<comment type="catalytic activity">
    <reaction evidence="3">
        <text>2 H2O2 = O2 + 2 H2O</text>
        <dbReference type="Rhea" id="RHEA:20309"/>
        <dbReference type="ChEBI" id="CHEBI:15377"/>
        <dbReference type="ChEBI" id="CHEBI:15379"/>
        <dbReference type="ChEBI" id="CHEBI:16240"/>
        <dbReference type="EC" id="1.11.1.6"/>
    </reaction>
</comment>
<comment type="cofactor">
    <cofactor evidence="6">
        <name>heme</name>
        <dbReference type="ChEBI" id="CHEBI:30413"/>
    </cofactor>
</comment>
<comment type="subunit">
    <text>Homotetramer.</text>
</comment>
<comment type="interaction">
    <interactant intactId="EBI-4061">
        <id>P15202</id>
    </interactant>
    <interactant intactId="EBI-16219">
        <id>P39940</id>
        <label>RSP5</label>
    </interactant>
    <organismsDiffer>false</organismsDiffer>
    <experiments>2</experiments>
</comment>
<comment type="subcellular location">
    <subcellularLocation>
        <location evidence="5">Peroxisome matrix</location>
    </subcellularLocation>
</comment>
<comment type="miscellaneous">
    <text>This is one of two catalases in S.cerevisiae; the other is catalase T, which is the cytoplasmic form.</text>
</comment>
<comment type="miscellaneous">
    <text evidence="4">Present with 623 molecules/cell in log phase SD medium.</text>
</comment>
<comment type="similarity">
    <text evidence="7">Belongs to the catalase family.</text>
</comment>
<accession>P15202</accession>
<accession>D6VSN6</accession>
<accession>E9P947</accession>
<reference key="1">
    <citation type="journal article" date="1988" name="Eur. J. Biochem.">
        <title>Sequence of the Saccharomyces cerevisiae CTA1 gene and amino acid sequence of catalase A derived from it.</title>
        <authorList>
            <person name="Cohen G."/>
            <person name="Rapatz W."/>
            <person name="Ruis H."/>
        </authorList>
    </citation>
    <scope>NUCLEOTIDE SEQUENCE [GENOMIC DNA]</scope>
</reference>
<reference key="2">
    <citation type="journal article" date="1997" name="Nature">
        <title>The nucleotide sequence of Saccharomyces cerevisiae chromosome IV.</title>
        <authorList>
            <person name="Jacq C."/>
            <person name="Alt-Moerbe J."/>
            <person name="Andre B."/>
            <person name="Arnold W."/>
            <person name="Bahr A."/>
            <person name="Ballesta J.P.G."/>
            <person name="Bargues M."/>
            <person name="Baron L."/>
            <person name="Becker A."/>
            <person name="Biteau N."/>
            <person name="Bloecker H."/>
            <person name="Blugeon C."/>
            <person name="Boskovic J."/>
            <person name="Brandt P."/>
            <person name="Brueckner M."/>
            <person name="Buitrago M.J."/>
            <person name="Coster F."/>
            <person name="Delaveau T."/>
            <person name="del Rey F."/>
            <person name="Dujon B."/>
            <person name="Eide L.G."/>
            <person name="Garcia-Cantalejo J.M."/>
            <person name="Goffeau A."/>
            <person name="Gomez-Peris A."/>
            <person name="Granotier C."/>
            <person name="Hanemann V."/>
            <person name="Hankeln T."/>
            <person name="Hoheisel J.D."/>
            <person name="Jaeger W."/>
            <person name="Jimenez A."/>
            <person name="Jonniaux J.-L."/>
            <person name="Kraemer C."/>
            <person name="Kuester H."/>
            <person name="Laamanen P."/>
            <person name="Legros Y."/>
            <person name="Louis E.J."/>
            <person name="Moeller-Rieker S."/>
            <person name="Monnet A."/>
            <person name="Moro M."/>
            <person name="Mueller-Auer S."/>
            <person name="Nussbaumer B."/>
            <person name="Paricio N."/>
            <person name="Paulin L."/>
            <person name="Perea J."/>
            <person name="Perez-Alonso M."/>
            <person name="Perez-Ortin J.E."/>
            <person name="Pohl T.M."/>
            <person name="Prydz H."/>
            <person name="Purnelle B."/>
            <person name="Rasmussen S.W."/>
            <person name="Remacha M.A."/>
            <person name="Revuelta J.L."/>
            <person name="Rieger M."/>
            <person name="Salom D."/>
            <person name="Saluz H.P."/>
            <person name="Saiz J.E."/>
            <person name="Saren A.-M."/>
            <person name="Schaefer M."/>
            <person name="Scharfe M."/>
            <person name="Schmidt E.R."/>
            <person name="Schneider C."/>
            <person name="Scholler P."/>
            <person name="Schwarz S."/>
            <person name="Soler-Mira A."/>
            <person name="Urrestarazu L.A."/>
            <person name="Verhasselt P."/>
            <person name="Vissers S."/>
            <person name="Voet M."/>
            <person name="Volckaert G."/>
            <person name="Wagner G."/>
            <person name="Wambutt R."/>
            <person name="Wedler E."/>
            <person name="Wedler H."/>
            <person name="Woelfl S."/>
            <person name="Harris D.E."/>
            <person name="Bowman S."/>
            <person name="Brown D."/>
            <person name="Churcher C.M."/>
            <person name="Connor R."/>
            <person name="Dedman K."/>
            <person name="Gentles S."/>
            <person name="Hamlin N."/>
            <person name="Hunt S."/>
            <person name="Jones L."/>
            <person name="McDonald S."/>
            <person name="Murphy L.D."/>
            <person name="Niblett D."/>
            <person name="Odell C."/>
            <person name="Oliver K."/>
            <person name="Rajandream M.A."/>
            <person name="Richards C."/>
            <person name="Shore L."/>
            <person name="Walsh S.V."/>
            <person name="Barrell B.G."/>
            <person name="Dietrich F.S."/>
            <person name="Mulligan J.T."/>
            <person name="Allen E."/>
            <person name="Araujo R."/>
            <person name="Aviles E."/>
            <person name="Berno A."/>
            <person name="Carpenter J."/>
            <person name="Chen E."/>
            <person name="Cherry J.M."/>
            <person name="Chung E."/>
            <person name="Duncan M."/>
            <person name="Hunicke-Smith S."/>
            <person name="Hyman R.W."/>
            <person name="Komp C."/>
            <person name="Lashkari D."/>
            <person name="Lew H."/>
            <person name="Lin D."/>
            <person name="Mosedale D."/>
            <person name="Nakahara K."/>
            <person name="Namath A."/>
            <person name="Oefner P."/>
            <person name="Oh C."/>
            <person name="Petel F.X."/>
            <person name="Roberts D."/>
            <person name="Schramm S."/>
            <person name="Schroeder M."/>
            <person name="Shogren T."/>
            <person name="Shroff N."/>
            <person name="Winant A."/>
            <person name="Yelton M.A."/>
            <person name="Botstein D."/>
            <person name="Davis R.W."/>
            <person name="Johnston M."/>
            <person name="Andrews S."/>
            <person name="Brinkman R."/>
            <person name="Cooper J."/>
            <person name="Ding H."/>
            <person name="Du Z."/>
            <person name="Favello A."/>
            <person name="Fulton L."/>
            <person name="Gattung S."/>
            <person name="Greco T."/>
            <person name="Hallsworth K."/>
            <person name="Hawkins J."/>
            <person name="Hillier L.W."/>
            <person name="Jier M."/>
            <person name="Johnson D."/>
            <person name="Johnston L."/>
            <person name="Kirsten J."/>
            <person name="Kucaba T."/>
            <person name="Langston Y."/>
            <person name="Latreille P."/>
            <person name="Le T."/>
            <person name="Mardis E."/>
            <person name="Menezes S."/>
            <person name="Miller N."/>
            <person name="Nhan M."/>
            <person name="Pauley A."/>
            <person name="Peluso D."/>
            <person name="Rifkin L."/>
            <person name="Riles L."/>
            <person name="Taich A."/>
            <person name="Trevaskis E."/>
            <person name="Vignati D."/>
            <person name="Wilcox L."/>
            <person name="Wohldman P."/>
            <person name="Vaudin M."/>
            <person name="Wilson R."/>
            <person name="Waterston R."/>
            <person name="Albermann K."/>
            <person name="Hani J."/>
            <person name="Heumann K."/>
            <person name="Kleine K."/>
            <person name="Mewes H.-W."/>
            <person name="Zollner A."/>
            <person name="Zaccaria P."/>
        </authorList>
    </citation>
    <scope>NUCLEOTIDE SEQUENCE [LARGE SCALE GENOMIC DNA]</scope>
    <source>
        <strain>ATCC 204508 / S288c</strain>
    </source>
</reference>
<reference key="3">
    <citation type="journal article" date="2014" name="G3 (Bethesda)">
        <title>The reference genome sequence of Saccharomyces cerevisiae: Then and now.</title>
        <authorList>
            <person name="Engel S.R."/>
            <person name="Dietrich F.S."/>
            <person name="Fisk D.G."/>
            <person name="Binkley G."/>
            <person name="Balakrishnan R."/>
            <person name="Costanzo M.C."/>
            <person name="Dwight S.S."/>
            <person name="Hitz B.C."/>
            <person name="Karra K."/>
            <person name="Nash R.S."/>
            <person name="Weng S."/>
            <person name="Wong E.D."/>
            <person name="Lloyd P."/>
            <person name="Skrzypek M.S."/>
            <person name="Miyasato S.R."/>
            <person name="Simison M."/>
            <person name="Cherry J.M."/>
        </authorList>
    </citation>
    <scope>GENOME REANNOTATION</scope>
    <source>
        <strain>ATCC 204508 / S288c</strain>
    </source>
</reference>
<reference key="4">
    <citation type="journal article" date="2007" name="Genome Res.">
        <title>Approaching a complete repository of sequence-verified protein-encoding clones for Saccharomyces cerevisiae.</title>
        <authorList>
            <person name="Hu Y."/>
            <person name="Rolfs A."/>
            <person name="Bhullar B."/>
            <person name="Murthy T.V.S."/>
            <person name="Zhu C."/>
            <person name="Berger M.F."/>
            <person name="Camargo A.A."/>
            <person name="Kelley F."/>
            <person name="McCarron S."/>
            <person name="Jepson D."/>
            <person name="Richardson A."/>
            <person name="Raphael J."/>
            <person name="Moreira D."/>
            <person name="Taycher E."/>
            <person name="Zuo D."/>
            <person name="Mohr S."/>
            <person name="Kane M.F."/>
            <person name="Williamson J."/>
            <person name="Simpson A.J.G."/>
            <person name="Bulyk M.L."/>
            <person name="Harlow E."/>
            <person name="Marsischky G."/>
            <person name="Kolodner R.D."/>
            <person name="LaBaer J."/>
        </authorList>
    </citation>
    <scope>NUCLEOTIDE SEQUENCE [GENOMIC DNA]</scope>
    <source>
        <strain>ATCC 204508 / S288c</strain>
    </source>
</reference>
<reference key="5">
    <citation type="journal article" date="1991" name="Mol. Cell. Biol.">
        <title>Peroxisomes in Saccharomyces cerevisiae: immunofluorescence analysis and import of catalase A into isolated peroxisomes.</title>
        <authorList>
            <person name="Thieringer R."/>
            <person name="Shio H."/>
            <person name="Han Y.S."/>
            <person name="Cohen G."/>
            <person name="Lazarow P.B."/>
        </authorList>
    </citation>
    <scope>SUBCELLULAR LOCATION</scope>
</reference>
<reference key="6">
    <citation type="journal article" date="2003" name="Nature">
        <title>Global analysis of protein expression in yeast.</title>
        <authorList>
            <person name="Ghaemmaghami S."/>
            <person name="Huh W.-K."/>
            <person name="Bower K."/>
            <person name="Howson R.W."/>
            <person name="Belle A."/>
            <person name="Dephoure N."/>
            <person name="O'Shea E.K."/>
            <person name="Weissman J.S."/>
        </authorList>
    </citation>
    <scope>LEVEL OF PROTEIN EXPRESSION [LARGE SCALE ANALYSIS]</scope>
</reference>
<reference key="7">
    <citation type="journal article" date="2012" name="Proc. Natl. Acad. Sci. U.S.A.">
        <title>N-terminal acetylome analyses and functional insights of the N-terminal acetyltransferase NatB.</title>
        <authorList>
            <person name="Van Damme P."/>
            <person name="Lasa M."/>
            <person name="Polevoda B."/>
            <person name="Gazquez C."/>
            <person name="Elosegui-Artola A."/>
            <person name="Kim D.S."/>
            <person name="De Juan-Pardo E."/>
            <person name="Demeyer K."/>
            <person name="Hole K."/>
            <person name="Larrea E."/>
            <person name="Timmerman E."/>
            <person name="Prieto J."/>
            <person name="Arnesen T."/>
            <person name="Sherman F."/>
            <person name="Gevaert K."/>
            <person name="Aldabe R."/>
        </authorList>
    </citation>
    <scope>ACETYLATION [LARGE SCALE ANALYSIS] AT SER-2</scope>
    <scope>CLEAVAGE OF INITIATOR METHIONINE [LARGE SCALE ANALYSIS]</scope>
    <scope>IDENTIFICATION BY MASS SPECTROMETRY [LARGE SCALE ANALYSIS]</scope>
</reference>
<reference key="8">
    <citation type="journal article" date="1999" name="J. Mol. Biol.">
        <title>Structure of catalase-A from Saccharomyces cerevisiae.</title>
        <authorList>
            <person name="Mate M.J."/>
            <person name="Zamocky M."/>
            <person name="Nykyri L.M."/>
            <person name="Herzog C."/>
            <person name="Alzari P.M."/>
            <person name="Betzel C."/>
            <person name="Koller F."/>
            <person name="Fita I."/>
        </authorList>
    </citation>
    <scope>X-RAY CRYSTALLOGRAPHY (2.4 ANGSTROMS)</scope>
    <scope>ACTIVE SITES</scope>
    <scope>COFACTOR</scope>
</reference>
<keyword id="KW-0002">3D-structure</keyword>
<keyword id="KW-0007">Acetylation</keyword>
<keyword id="KW-0349">Heme</keyword>
<keyword id="KW-0376">Hydrogen peroxide</keyword>
<keyword id="KW-0408">Iron</keyword>
<keyword id="KW-0479">Metal-binding</keyword>
<keyword id="KW-0560">Oxidoreductase</keyword>
<keyword id="KW-0575">Peroxidase</keyword>
<keyword id="KW-0576">Peroxisome</keyword>
<keyword id="KW-1185">Reference proteome</keyword>
<name>CATA_YEAST</name>
<organism>
    <name type="scientific">Saccharomyces cerevisiae (strain ATCC 204508 / S288c)</name>
    <name type="common">Baker's yeast</name>
    <dbReference type="NCBI Taxonomy" id="559292"/>
    <lineage>
        <taxon>Eukaryota</taxon>
        <taxon>Fungi</taxon>
        <taxon>Dikarya</taxon>
        <taxon>Ascomycota</taxon>
        <taxon>Saccharomycotina</taxon>
        <taxon>Saccharomycetes</taxon>
        <taxon>Saccharomycetales</taxon>
        <taxon>Saccharomycetaceae</taxon>
        <taxon>Saccharomyces</taxon>
    </lineage>
</organism>
<feature type="initiator methionine" description="Removed" evidence="8">
    <location>
        <position position="1"/>
    </location>
</feature>
<feature type="chain" id="PRO_0000084928" description="Peroxisomal catalase A">
    <location>
        <begin position="2"/>
        <end position="515"/>
    </location>
</feature>
<feature type="short sequence motif" description="Microbody targeting signal" evidence="2">
    <location>
        <begin position="513"/>
        <end position="515"/>
    </location>
</feature>
<feature type="active site" evidence="6">
    <location>
        <position position="70"/>
    </location>
</feature>
<feature type="active site" evidence="6">
    <location>
        <position position="143"/>
    </location>
</feature>
<feature type="binding site" description="axial binding residue" evidence="6">
    <location>
        <position position="355"/>
    </location>
    <ligand>
        <name>heme</name>
        <dbReference type="ChEBI" id="CHEBI:30413"/>
    </ligand>
    <ligandPart>
        <name>Fe</name>
        <dbReference type="ChEBI" id="CHEBI:18248"/>
    </ligandPart>
</feature>
<feature type="modified residue" description="N-acetylserine" evidence="8">
    <location>
        <position position="2"/>
    </location>
</feature>
<feature type="sequence conflict" description="In Ref. 4; AAU09703." evidence="7" ref="4">
    <original>F</original>
    <variation>L</variation>
    <location>
        <position position="131"/>
    </location>
</feature>
<feature type="strand" evidence="9">
    <location>
        <begin position="31"/>
        <end position="34"/>
    </location>
</feature>
<feature type="strand" evidence="9">
    <location>
        <begin position="36"/>
        <end position="39"/>
    </location>
</feature>
<feature type="turn" evidence="9">
    <location>
        <begin position="40"/>
        <end position="42"/>
    </location>
</feature>
<feature type="helix" evidence="9">
    <location>
        <begin position="50"/>
        <end position="59"/>
    </location>
</feature>
<feature type="strand" evidence="9">
    <location>
        <begin position="72"/>
        <end position="82"/>
    </location>
</feature>
<feature type="turn" evidence="9">
    <location>
        <begin position="87"/>
        <end position="89"/>
    </location>
</feature>
<feature type="helix" evidence="9">
    <location>
        <begin position="93"/>
        <end position="95"/>
    </location>
</feature>
<feature type="strand" evidence="9">
    <location>
        <begin position="101"/>
        <end position="109"/>
    </location>
</feature>
<feature type="strand" evidence="9">
    <location>
        <begin position="111"/>
        <end position="113"/>
    </location>
</feature>
<feature type="strand" evidence="9">
    <location>
        <begin position="119"/>
        <end position="123"/>
    </location>
</feature>
<feature type="strand" evidence="9">
    <location>
        <begin position="126"/>
        <end position="133"/>
    </location>
</feature>
<feature type="strand" evidence="9">
    <location>
        <begin position="136"/>
        <end position="147"/>
    </location>
</feature>
<feature type="helix" evidence="9">
    <location>
        <begin position="155"/>
        <end position="163"/>
    </location>
</feature>
<feature type="turn" evidence="9">
    <location>
        <begin position="167"/>
        <end position="169"/>
    </location>
</feature>
<feature type="helix" evidence="9">
    <location>
        <begin position="174"/>
        <end position="181"/>
    </location>
</feature>
<feature type="helix" evidence="9">
    <location>
        <begin position="184"/>
        <end position="189"/>
    </location>
</feature>
<feature type="helix" evidence="9">
    <location>
        <begin position="190"/>
        <end position="197"/>
    </location>
</feature>
<feature type="helix" evidence="9">
    <location>
        <begin position="199"/>
        <end position="201"/>
    </location>
</feature>
<feature type="strand" evidence="9">
    <location>
        <begin position="202"/>
        <end position="204"/>
    </location>
</feature>
<feature type="helix" evidence="9">
    <location>
        <begin position="206"/>
        <end position="208"/>
    </location>
</feature>
<feature type="strand" evidence="9">
    <location>
        <begin position="217"/>
        <end position="220"/>
    </location>
</feature>
<feature type="strand" evidence="9">
    <location>
        <begin position="226"/>
        <end position="237"/>
    </location>
</feature>
<feature type="helix" evidence="9">
    <location>
        <begin position="244"/>
        <end position="253"/>
    </location>
</feature>
<feature type="helix" evidence="9">
    <location>
        <begin position="257"/>
        <end position="267"/>
    </location>
</feature>
<feature type="strand" evidence="9">
    <location>
        <begin position="273"/>
        <end position="281"/>
    </location>
</feature>
<feature type="helix" evidence="9">
    <location>
        <begin position="283"/>
        <end position="287"/>
    </location>
</feature>
<feature type="strand" evidence="9">
    <location>
        <begin position="289"/>
        <end position="291"/>
    </location>
</feature>
<feature type="turn" evidence="9">
    <location>
        <begin position="302"/>
        <end position="304"/>
    </location>
</feature>
<feature type="strand" evidence="9">
    <location>
        <begin position="308"/>
        <end position="317"/>
    </location>
</feature>
<feature type="helix" evidence="9">
    <location>
        <begin position="322"/>
        <end position="325"/>
    </location>
</feature>
<feature type="turn" evidence="9">
    <location>
        <begin position="326"/>
        <end position="328"/>
    </location>
</feature>
<feature type="strand" evidence="9">
    <location>
        <begin position="340"/>
        <end position="342"/>
    </location>
</feature>
<feature type="helix" evidence="9">
    <location>
        <begin position="346"/>
        <end position="362"/>
    </location>
</feature>
<feature type="helix" evidence="9">
    <location>
        <begin position="367"/>
        <end position="369"/>
    </location>
</feature>
<feature type="helix" evidence="9">
    <location>
        <begin position="371"/>
        <end position="373"/>
    </location>
</feature>
<feature type="turn" evidence="9">
    <location>
        <begin position="395"/>
        <end position="398"/>
    </location>
</feature>
<feature type="strand" evidence="9">
    <location>
        <begin position="425"/>
        <end position="427"/>
    </location>
</feature>
<feature type="strand" evidence="9">
    <location>
        <begin position="429"/>
        <end position="432"/>
    </location>
</feature>
<feature type="strand" evidence="9">
    <location>
        <begin position="438"/>
        <end position="440"/>
    </location>
</feature>
<feature type="helix" evidence="9">
    <location>
        <begin position="441"/>
        <end position="454"/>
    </location>
</feature>
<feature type="helix" evidence="9">
    <location>
        <begin position="459"/>
        <end position="471"/>
    </location>
</feature>
<feature type="helix" evidence="9">
    <location>
        <begin position="476"/>
        <end position="487"/>
    </location>
</feature>
<feature type="helix" evidence="9">
    <location>
        <begin position="491"/>
        <end position="501"/>
    </location>
</feature>
<sequence length="515" mass="58555">MSKLGQEKNEVNYSDVREDRVVTNSTGNPINEPFVTQRIGEHGPLLLQDYNLIDSLAHFNRENIPQRNPHAHGSGAFGYFEVTDDITDICGSAMFSKIGKRTKCLTRFSTVGGDKGSADTVRDPRGFATKFYTEEGNLDWVYNNTPVFFIRDPSKFPHFIHTQKRNPQTNLRDADMFWDFLTTPENQVAIHQVMILFSDRGTPANYRSMHGYSGHTYKWSNKNGDWHYVQVHIKTDQGIKNLTIEEATKIAGSNPDYCQQDLFEAIQNGNYPSWTVYIQTMTERDAKKLPFSVFDLTKVWPQGQFPLRRVGKIVLNENPLNFFAQVEQAAFAPSTTVPYQEASADPVLQARLFSYADAHRYRLGPNFHQIPVNCPYASKFFNPAIRDGPMNVNGNFGSEPTYLANDKSYTYIQQDRPIQQHQEVWNGPAIPYHWATSPGDVDFVQARNLYRVLGKQPGQQKNLAYNIGIHVEGACPQIQQRVYDMFARVDKGLSEAIKKVAEAKHASELSSNSKF</sequence>
<gene>
    <name type="primary">CTA1</name>
    <name type="ordered locus">YDR256C</name>
    <name type="ORF">YD9320A.06C</name>
</gene>
<protein>
    <recommendedName>
        <fullName>Peroxisomal catalase A</fullName>
        <ecNumber evidence="3">1.11.1.6</ecNumber>
    </recommendedName>
</protein>